<name>BCL3_MOUSE</name>
<gene>
    <name type="primary">Bcl3</name>
</gene>
<accession>Q9Z2F6</accession>
<evidence type="ECO:0000250" key="1"/>
<evidence type="ECO:0000250" key="2">
    <source>
        <dbReference type="UniProtKB" id="P20749"/>
    </source>
</evidence>
<evidence type="ECO:0000256" key="3">
    <source>
        <dbReference type="SAM" id="MobiDB-lite"/>
    </source>
</evidence>
<evidence type="ECO:0000269" key="4">
    <source>
    </source>
</evidence>
<evidence type="ECO:0000269" key="5">
    <source>
    </source>
</evidence>
<evidence type="ECO:0000305" key="6"/>
<feature type="chain" id="PRO_0000066977" description="B-cell lymphoma 3 protein homolog">
    <location>
        <begin position="1"/>
        <end position="448"/>
    </location>
</feature>
<feature type="repeat" description="ANK 1">
    <location>
        <begin position="129"/>
        <end position="161"/>
    </location>
</feature>
<feature type="repeat" description="ANK 2">
    <location>
        <begin position="166"/>
        <end position="195"/>
    </location>
</feature>
<feature type="repeat" description="ANK 3">
    <location>
        <begin position="199"/>
        <end position="228"/>
    </location>
</feature>
<feature type="repeat" description="ANK 4">
    <location>
        <begin position="236"/>
        <end position="265"/>
    </location>
</feature>
<feature type="repeat" description="ANK 5">
    <location>
        <begin position="270"/>
        <end position="299"/>
    </location>
</feature>
<feature type="repeat" description="ANK 6">
    <location>
        <begin position="303"/>
        <end position="332"/>
    </location>
</feature>
<feature type="repeat" description="ANK 7">
    <location>
        <begin position="333"/>
        <end position="362"/>
    </location>
</feature>
<feature type="region of interest" description="Disordered" evidence="3">
    <location>
        <begin position="1"/>
        <end position="54"/>
    </location>
</feature>
<feature type="region of interest" description="Disordered" evidence="3">
    <location>
        <begin position="356"/>
        <end position="448"/>
    </location>
</feature>
<feature type="compositionally biased region" description="Polar residues" evidence="3">
    <location>
        <begin position="361"/>
        <end position="376"/>
    </location>
</feature>
<feature type="compositionally biased region" description="Low complexity" evidence="3">
    <location>
        <begin position="377"/>
        <end position="398"/>
    </location>
</feature>
<feature type="compositionally biased region" description="Polar residues" evidence="3">
    <location>
        <begin position="411"/>
        <end position="423"/>
    </location>
</feature>
<feature type="compositionally biased region" description="Low complexity" evidence="3">
    <location>
        <begin position="425"/>
        <end position="436"/>
    </location>
</feature>
<feature type="compositionally biased region" description="Pro residues" evidence="3">
    <location>
        <begin position="437"/>
        <end position="448"/>
    </location>
</feature>
<feature type="modified residue" description="Phosphoserine" evidence="2">
    <location>
        <position position="39"/>
    </location>
</feature>
<feature type="modified residue" description="Phosphoserine" evidence="2">
    <location>
        <position position="369"/>
    </location>
</feature>
<feature type="modified residue" description="Phosphoserine; by GSK3" evidence="2">
    <location>
        <position position="396"/>
    </location>
</feature>
<feature type="modified residue" description="Phosphoserine; by GSK3" evidence="2">
    <location>
        <position position="400"/>
    </location>
</feature>
<comment type="function">
    <text evidence="1 4">Contributes to the regulation of transcriptional activation of NF-kappa-B target genes. In the cytoplasm, inhibits the nuclear translocation of the NF-kappa-B p50 subunit (By similarity). In the nucleus, acts as a transcriptional activator that promotes transcription of NF-kappa-B target genes. Contributes to the regulation of cell proliferation.</text>
</comment>
<comment type="subunit">
    <text evidence="1 4 5">Component of a complex consisting of the NF-kappa-B p52-p52 homodimer and BCL3. Component of a complex consisting of the NF-kappa-B p50-p50 homodimer and BCL3. Interacts with N4BP2, COPS5 and PIR (By similarity). Interacts with CYLD.</text>
</comment>
<comment type="interaction">
    <interactant intactId="EBI-943884">
        <id>Q9Z2F6</id>
    </interactant>
    <interactant intactId="EBI-943859">
        <id>Q80TQ2</id>
        <label>Cyld</label>
    </interactant>
    <organismsDiffer>false</organismsDiffer>
    <experiments>5</experiments>
</comment>
<comment type="subcellular location">
    <subcellularLocation>
        <location evidence="4">Nucleus</location>
    </subcellularLocation>
    <subcellularLocation>
        <location evidence="4">Cytoplasm</location>
    </subcellularLocation>
    <subcellularLocation>
        <location evidence="4">Cytoplasm</location>
        <location evidence="4">Perinuclear region</location>
    </subcellularLocation>
    <text>Ubiquitination via 'Lys-63'-linked ubiquitin chains is required for nuclear accumulation.</text>
</comment>
<comment type="PTM">
    <text>Polyubiquitinated. Ubiquitination via 'Lys-63'-linked ubiquitin chains is required for nuclear accumulation. Deubiquitinated by CYLD, which acts on 'Lys-63'-linked ubiquitin chains. Deubiquitination by CYLD prevents nuclear accumulation.</text>
</comment>
<comment type="PTM">
    <text evidence="1">Activated by phosphorylation.</text>
</comment>
<comment type="caution">
    <text evidence="6">It is uncertain whether Met-1 or Met-9 is the initiator.</text>
</comment>
<comment type="sequence caution" evidence="6">
    <conflict type="erroneous initiation">
        <sequence resource="EMBL-CDS" id="AAC79694"/>
    </conflict>
    <text>Truncated N-terminus.</text>
</comment>
<proteinExistence type="evidence at protein level"/>
<reference key="1">
    <citation type="journal article" date="2009" name="PLoS Biol.">
        <title>Lineage-specific biology revealed by a finished genome assembly of the mouse.</title>
        <authorList>
            <person name="Church D.M."/>
            <person name="Goodstadt L."/>
            <person name="Hillier L.W."/>
            <person name="Zody M.C."/>
            <person name="Goldstein S."/>
            <person name="She X."/>
            <person name="Bult C.J."/>
            <person name="Agarwala R."/>
            <person name="Cherry J.L."/>
            <person name="DiCuccio M."/>
            <person name="Hlavina W."/>
            <person name="Kapustin Y."/>
            <person name="Meric P."/>
            <person name="Maglott D."/>
            <person name="Birtle Z."/>
            <person name="Marques A.C."/>
            <person name="Graves T."/>
            <person name="Zhou S."/>
            <person name="Teague B."/>
            <person name="Potamousis K."/>
            <person name="Churas C."/>
            <person name="Place M."/>
            <person name="Herschleb J."/>
            <person name="Runnheim R."/>
            <person name="Forrest D."/>
            <person name="Amos-Landgraf J."/>
            <person name="Schwartz D.C."/>
            <person name="Cheng Z."/>
            <person name="Lindblad-Toh K."/>
            <person name="Eichler E.E."/>
            <person name="Ponting C.P."/>
        </authorList>
    </citation>
    <scope>NUCLEOTIDE SEQUENCE [LARGE SCALE GENOMIC DNA]</scope>
    <source>
        <strain>C57BL/6J</strain>
    </source>
</reference>
<reference key="2">
    <citation type="journal article" date="1999" name="Blood">
        <title>Interleukin-9 regulates NF-kappaB activity through BCL3 gene induction.</title>
        <authorList>
            <person name="Richard M."/>
            <person name="Louahed J."/>
            <person name="Demoulin J.-B."/>
            <person name="Renauld J.-C."/>
        </authorList>
    </citation>
    <scope>NUCLEOTIDE SEQUENCE [MRNA]</scope>
    <source>
        <strain>C57BL/6J</strain>
    </source>
</reference>
<reference key="3">
    <citation type="journal article" date="2006" name="Cell">
        <title>Cyld inhibits tumor cell proliferation by blocking Bcl-3-dependent NF-kappaB signaling.</title>
        <authorList>
            <person name="Massoumi R."/>
            <person name="Chmielarska K."/>
            <person name="Hennecke K."/>
            <person name="Pfeifer A."/>
            <person name="Fassler R."/>
        </authorList>
    </citation>
    <scope>FUNCTION</scope>
    <scope>INTERACTION WITH CYLD</scope>
    <scope>SUBCELLULAR LOCATION</scope>
</reference>
<reference key="4">
    <citation type="journal article" date="2010" name="EMBO J.">
        <title>CYLD negatively regulates cell-cycle progression by inactivating HDAC6 and increasing the levels of acetylated tubulin.</title>
        <authorList>
            <person name="Wickstrom S.A."/>
            <person name="Masoumi K.C."/>
            <person name="Khochbin S."/>
            <person name="Fassler R."/>
            <person name="Massoumi R."/>
        </authorList>
    </citation>
    <scope>INTERACTION WITH CYLD</scope>
</reference>
<protein>
    <recommendedName>
        <fullName>B-cell lymphoma 3 protein homolog</fullName>
        <shortName>BCL-3</shortName>
    </recommendedName>
</protein>
<dbReference type="EMBL" id="AC149085">
    <property type="status" value="NOT_ANNOTATED_CDS"/>
    <property type="molecule type" value="Genomic_DNA"/>
</dbReference>
<dbReference type="EMBL" id="AC149282">
    <property type="status" value="NOT_ANNOTATED_CDS"/>
    <property type="molecule type" value="Genomic_DNA"/>
</dbReference>
<dbReference type="EMBL" id="AF067774">
    <property type="protein sequence ID" value="AAC79694.1"/>
    <property type="status" value="ALT_INIT"/>
    <property type="molecule type" value="mRNA"/>
</dbReference>
<dbReference type="CCDS" id="CCDS20914.2"/>
<dbReference type="RefSeq" id="NP_291079.2">
    <property type="nucleotide sequence ID" value="NM_033601.3"/>
</dbReference>
<dbReference type="SMR" id="Q9Z2F6"/>
<dbReference type="BioGRID" id="198326">
    <property type="interactions" value="1"/>
</dbReference>
<dbReference type="FunCoup" id="Q9Z2F6">
    <property type="interactions" value="210"/>
</dbReference>
<dbReference type="IntAct" id="Q9Z2F6">
    <property type="interactions" value="1"/>
</dbReference>
<dbReference type="MINT" id="Q9Z2F6"/>
<dbReference type="STRING" id="10090.ENSMUSP00000113851"/>
<dbReference type="GlyGen" id="Q9Z2F6">
    <property type="glycosylation" value="2 sites, 1 O-linked glycan (1 site)"/>
</dbReference>
<dbReference type="iPTMnet" id="Q9Z2F6"/>
<dbReference type="PhosphoSitePlus" id="Q9Z2F6"/>
<dbReference type="PaxDb" id="10090-ENSMUSP00000113851"/>
<dbReference type="ProteomicsDB" id="273548"/>
<dbReference type="Antibodypedia" id="3672">
    <property type="antibodies" value="398 antibodies from 42 providers"/>
</dbReference>
<dbReference type="DNASU" id="12051"/>
<dbReference type="Ensembl" id="ENSMUST00000120537.8">
    <property type="protein sequence ID" value="ENSMUSP00000113851.2"/>
    <property type="gene ID" value="ENSMUSG00000053175.18"/>
</dbReference>
<dbReference type="GeneID" id="12051"/>
<dbReference type="KEGG" id="mmu:12051"/>
<dbReference type="UCSC" id="uc009fnk.2">
    <property type="organism name" value="mouse"/>
</dbReference>
<dbReference type="AGR" id="MGI:88140"/>
<dbReference type="CTD" id="602"/>
<dbReference type="MGI" id="MGI:88140">
    <property type="gene designation" value="Bcl3"/>
</dbReference>
<dbReference type="VEuPathDB" id="HostDB:ENSMUSG00000053175"/>
<dbReference type="eggNOG" id="KOG0504">
    <property type="taxonomic scope" value="Eukaryota"/>
</dbReference>
<dbReference type="GeneTree" id="ENSGT00940000161392"/>
<dbReference type="HOGENOM" id="CLU_720685_0_0_1"/>
<dbReference type="InParanoid" id="Q9Z2F6"/>
<dbReference type="OMA" id="MMCSMEH"/>
<dbReference type="OrthoDB" id="10254947at2759"/>
<dbReference type="PhylomeDB" id="Q9Z2F6"/>
<dbReference type="TreeFam" id="TF320166"/>
<dbReference type="BioGRID-ORCS" id="12051">
    <property type="hits" value="1 hit in 80 CRISPR screens"/>
</dbReference>
<dbReference type="ChiTaRS" id="Bcl3">
    <property type="organism name" value="mouse"/>
</dbReference>
<dbReference type="PRO" id="PR:Q9Z2F6"/>
<dbReference type="Proteomes" id="UP000000589">
    <property type="component" value="Chromosome 7"/>
</dbReference>
<dbReference type="RNAct" id="Q9Z2F6">
    <property type="molecule type" value="protein"/>
</dbReference>
<dbReference type="Bgee" id="ENSMUSG00000053175">
    <property type="expression patterns" value="Expressed in lumbar dorsal root ganglion and 125 other cell types or tissues"/>
</dbReference>
<dbReference type="ExpressionAtlas" id="Q9Z2F6">
    <property type="expression patterns" value="baseline and differential"/>
</dbReference>
<dbReference type="GO" id="GO:0032996">
    <property type="term" value="C:Bcl3-Bcl10 complex"/>
    <property type="evidence" value="ECO:0007669"/>
    <property type="project" value="Ensembl"/>
</dbReference>
<dbReference type="GO" id="GO:0033257">
    <property type="term" value="C:Bcl3/NF-kappaB2 complex"/>
    <property type="evidence" value="ECO:0007669"/>
    <property type="project" value="Ensembl"/>
</dbReference>
<dbReference type="GO" id="GO:0036064">
    <property type="term" value="C:ciliary basal body"/>
    <property type="evidence" value="ECO:0007669"/>
    <property type="project" value="Ensembl"/>
</dbReference>
<dbReference type="GO" id="GO:0005829">
    <property type="term" value="C:cytosol"/>
    <property type="evidence" value="ECO:0007669"/>
    <property type="project" value="Ensembl"/>
</dbReference>
<dbReference type="GO" id="GO:0030496">
    <property type="term" value="C:midbody"/>
    <property type="evidence" value="ECO:0007669"/>
    <property type="project" value="Ensembl"/>
</dbReference>
<dbReference type="GO" id="GO:0005654">
    <property type="term" value="C:nucleoplasm"/>
    <property type="evidence" value="ECO:0007669"/>
    <property type="project" value="Ensembl"/>
</dbReference>
<dbReference type="GO" id="GO:0048471">
    <property type="term" value="C:perinuclear region of cytoplasm"/>
    <property type="evidence" value="ECO:0007669"/>
    <property type="project" value="UniProtKB-SubCell"/>
</dbReference>
<dbReference type="GO" id="GO:0140297">
    <property type="term" value="F:DNA-binding transcription factor binding"/>
    <property type="evidence" value="ECO:0007669"/>
    <property type="project" value="Ensembl"/>
</dbReference>
<dbReference type="GO" id="GO:0042826">
    <property type="term" value="F:histone deacetylase binding"/>
    <property type="evidence" value="ECO:0007669"/>
    <property type="project" value="Ensembl"/>
</dbReference>
<dbReference type="GO" id="GO:0003713">
    <property type="term" value="F:transcription coactivator activity"/>
    <property type="evidence" value="ECO:0000314"/>
    <property type="project" value="MGI"/>
</dbReference>
<dbReference type="GO" id="GO:0003714">
    <property type="term" value="F:transcription corepressor activity"/>
    <property type="evidence" value="ECO:0007669"/>
    <property type="project" value="Ensembl"/>
</dbReference>
<dbReference type="GO" id="GO:0019730">
    <property type="term" value="P:antimicrobial humoral response"/>
    <property type="evidence" value="ECO:0000315"/>
    <property type="project" value="MGI"/>
</dbReference>
<dbReference type="GO" id="GO:0007249">
    <property type="term" value="P:canonical NF-kappaB signal transduction"/>
    <property type="evidence" value="ECO:0007669"/>
    <property type="project" value="Ensembl"/>
</dbReference>
<dbReference type="GO" id="GO:0042742">
    <property type="term" value="P:defense response to bacterium"/>
    <property type="evidence" value="ECO:0000315"/>
    <property type="project" value="MGI"/>
</dbReference>
<dbReference type="GO" id="GO:0042832">
    <property type="term" value="P:defense response to protozoan"/>
    <property type="evidence" value="ECO:0000315"/>
    <property type="project" value="MGI"/>
</dbReference>
<dbReference type="GO" id="GO:0030330">
    <property type="term" value="P:DNA damage response, signal transduction by p53 class mediator"/>
    <property type="evidence" value="ECO:0007669"/>
    <property type="project" value="Ensembl"/>
</dbReference>
<dbReference type="GO" id="GO:0030198">
    <property type="term" value="P:extracellular matrix organization"/>
    <property type="evidence" value="ECO:0000315"/>
    <property type="project" value="MGI"/>
</dbReference>
<dbReference type="GO" id="GO:0002268">
    <property type="term" value="P:follicular dendritic cell differentiation"/>
    <property type="evidence" value="ECO:0000315"/>
    <property type="project" value="MGI"/>
</dbReference>
<dbReference type="GO" id="GO:0002467">
    <property type="term" value="P:germinal center formation"/>
    <property type="evidence" value="ECO:0000315"/>
    <property type="project" value="MGI"/>
</dbReference>
<dbReference type="GO" id="GO:0002455">
    <property type="term" value="P:humoral immune response mediated by circulating immunoglobulin"/>
    <property type="evidence" value="ECO:0000315"/>
    <property type="project" value="MGI"/>
</dbReference>
<dbReference type="GO" id="GO:0042771">
    <property type="term" value="P:intrinsic apoptotic signaling pathway in response to DNA damage by p53 class mediator"/>
    <property type="evidence" value="ECO:0000266"/>
    <property type="project" value="MGI"/>
</dbReference>
<dbReference type="GO" id="GO:0002315">
    <property type="term" value="P:marginal zone B cell differentiation"/>
    <property type="evidence" value="ECO:0000315"/>
    <property type="project" value="MGI"/>
</dbReference>
<dbReference type="GO" id="GO:0032717">
    <property type="term" value="P:negative regulation of interleukin-8 production"/>
    <property type="evidence" value="ECO:0007669"/>
    <property type="project" value="Ensembl"/>
</dbReference>
<dbReference type="GO" id="GO:0046426">
    <property type="term" value="P:negative regulation of receptor signaling pathway via JAK-STAT"/>
    <property type="evidence" value="ECO:0007669"/>
    <property type="project" value="Ensembl"/>
</dbReference>
<dbReference type="GO" id="GO:0070233">
    <property type="term" value="P:negative regulation of T cell apoptotic process"/>
    <property type="evidence" value="ECO:0000315"/>
    <property type="project" value="MGI"/>
</dbReference>
<dbReference type="GO" id="GO:0032720">
    <property type="term" value="P:negative regulation of tumor necrosis factor production"/>
    <property type="evidence" value="ECO:0000315"/>
    <property type="project" value="MGI"/>
</dbReference>
<dbReference type="GO" id="GO:0032733">
    <property type="term" value="P:positive regulation of interleukin-10 production"/>
    <property type="evidence" value="ECO:0000315"/>
    <property type="project" value="MGI"/>
</dbReference>
<dbReference type="GO" id="GO:0045944">
    <property type="term" value="P:positive regulation of transcription by RNA polymerase II"/>
    <property type="evidence" value="ECO:0000314"/>
    <property type="project" value="MGI"/>
</dbReference>
<dbReference type="GO" id="GO:0045727">
    <property type="term" value="P:positive regulation of translation"/>
    <property type="evidence" value="ECO:0007669"/>
    <property type="project" value="Ensembl"/>
</dbReference>
<dbReference type="GO" id="GO:0032729">
    <property type="term" value="P:positive regulation of type II interferon production"/>
    <property type="evidence" value="ECO:0000315"/>
    <property type="project" value="MGI"/>
</dbReference>
<dbReference type="GO" id="GO:0006606">
    <property type="term" value="P:protein import into nucleus"/>
    <property type="evidence" value="ECO:0007669"/>
    <property type="project" value="Ensembl"/>
</dbReference>
<dbReference type="GO" id="GO:1901222">
    <property type="term" value="P:regulation of non-canonical NF-kappaB signal transduction"/>
    <property type="evidence" value="ECO:0007669"/>
    <property type="project" value="Ensembl"/>
</dbReference>
<dbReference type="GO" id="GO:0010225">
    <property type="term" value="P:response to UV-C"/>
    <property type="evidence" value="ECO:0007669"/>
    <property type="project" value="Ensembl"/>
</dbReference>
<dbReference type="GO" id="GO:0009615">
    <property type="term" value="P:response to virus"/>
    <property type="evidence" value="ECO:0007669"/>
    <property type="project" value="Ensembl"/>
</dbReference>
<dbReference type="GO" id="GO:0048536">
    <property type="term" value="P:spleen development"/>
    <property type="evidence" value="ECO:0000315"/>
    <property type="project" value="MGI"/>
</dbReference>
<dbReference type="GO" id="GO:0070231">
    <property type="term" value="P:T cell apoptotic process"/>
    <property type="evidence" value="ECO:0000315"/>
    <property type="project" value="MGI"/>
</dbReference>
<dbReference type="GO" id="GO:0042088">
    <property type="term" value="P:T-helper 1 type immune response"/>
    <property type="evidence" value="ECO:0000315"/>
    <property type="project" value="MGI"/>
</dbReference>
<dbReference type="GO" id="GO:0045064">
    <property type="term" value="P:T-helper 2 cell differentiation"/>
    <property type="evidence" value="ECO:0000315"/>
    <property type="project" value="MGI"/>
</dbReference>
<dbReference type="FunFam" id="1.25.40.20:FF:000187">
    <property type="entry name" value="B-cell lymphoma 3 protein"/>
    <property type="match status" value="1"/>
</dbReference>
<dbReference type="Gene3D" id="1.25.40.20">
    <property type="entry name" value="Ankyrin repeat-containing domain"/>
    <property type="match status" value="1"/>
</dbReference>
<dbReference type="InterPro" id="IPR002110">
    <property type="entry name" value="Ankyrin_rpt"/>
</dbReference>
<dbReference type="InterPro" id="IPR036770">
    <property type="entry name" value="Ankyrin_rpt-contain_sf"/>
</dbReference>
<dbReference type="InterPro" id="IPR051070">
    <property type="entry name" value="NF-kappa-B_inhibitor"/>
</dbReference>
<dbReference type="PANTHER" id="PTHR46680">
    <property type="entry name" value="NF-KAPPA-B INHIBITOR ALPHA"/>
    <property type="match status" value="1"/>
</dbReference>
<dbReference type="PANTHER" id="PTHR46680:SF2">
    <property type="entry name" value="NF-KAPPA-B INHIBITOR ZETA"/>
    <property type="match status" value="1"/>
</dbReference>
<dbReference type="Pfam" id="PF12796">
    <property type="entry name" value="Ank_2"/>
    <property type="match status" value="2"/>
</dbReference>
<dbReference type="PRINTS" id="PR01415">
    <property type="entry name" value="ANKYRIN"/>
</dbReference>
<dbReference type="SMART" id="SM00248">
    <property type="entry name" value="ANK"/>
    <property type="match status" value="6"/>
</dbReference>
<dbReference type="SUPFAM" id="SSF48403">
    <property type="entry name" value="Ankyrin repeat"/>
    <property type="match status" value="1"/>
</dbReference>
<dbReference type="PROSITE" id="PS50297">
    <property type="entry name" value="ANK_REP_REGION"/>
    <property type="match status" value="1"/>
</dbReference>
<dbReference type="PROSITE" id="PS50088">
    <property type="entry name" value="ANK_REPEAT"/>
    <property type="match status" value="5"/>
</dbReference>
<organism>
    <name type="scientific">Mus musculus</name>
    <name type="common">Mouse</name>
    <dbReference type="NCBI Taxonomy" id="10090"/>
    <lineage>
        <taxon>Eukaryota</taxon>
        <taxon>Metazoa</taxon>
        <taxon>Chordata</taxon>
        <taxon>Craniata</taxon>
        <taxon>Vertebrata</taxon>
        <taxon>Euteleostomi</taxon>
        <taxon>Mammalia</taxon>
        <taxon>Eutheria</taxon>
        <taxon>Euarchontoglires</taxon>
        <taxon>Glires</taxon>
        <taxon>Rodentia</taxon>
        <taxon>Myomorpha</taxon>
        <taxon>Muroidea</taxon>
        <taxon>Muridae</taxon>
        <taxon>Murinae</taxon>
        <taxon>Mus</taxon>
        <taxon>Mus</taxon>
    </lineage>
</organism>
<keyword id="KW-0010">Activator</keyword>
<keyword id="KW-0040">ANK repeat</keyword>
<keyword id="KW-0963">Cytoplasm</keyword>
<keyword id="KW-0539">Nucleus</keyword>
<keyword id="KW-0597">Phosphoprotein</keyword>
<keyword id="KW-1185">Reference proteome</keyword>
<keyword id="KW-0677">Repeat</keyword>
<keyword id="KW-0804">Transcription</keyword>
<keyword id="KW-0805">Transcription regulation</keyword>
<keyword id="KW-0832">Ubl conjugation</keyword>
<sequence length="448" mass="47216">MPRCPAGAMDEGPVDLRTRPKGTPGAALPLRKRPLRPASPEPATTRSPAGPLDALRSGCDVPVVPGPPHCVARPEALYYQGPLMPIYSTPTMAPHFPLLNLPTHPYSMICPMEHPLSADIAMATRVDEDGDTPLHIAVVQNNIAAVYRILSLFKLGSREVDVHNNLRQTPLHLAVITTLPDMVRLLVTAGASPMALDRHGQTAIHLACEHRSPSCLQALLDSATSGSVDLEVRNYEGLTALHVAVNTGCQEAVLLLLERGADIDAVDIKSGRSPLIHAVENNSLNMVQLLLLHGANVNAQMYSGSSALHSASGRGLLPLVRTLVRSGADSGLKNCHNDTPLMVARSRRVIDILRGKASRAASGSQPEPSPDQSATNSPESSSRLSSNGLQSSPSSSPSLSPPKDAPGFPATPQNFFLPTTSTPAFLPFPGVLRGPGRPVPPSPAPGSS</sequence>